<reference key="1">
    <citation type="journal article" date="1995" name="J. Mol. Biol.">
        <title>Prion protein gene variation among primates.</title>
        <authorList>
            <person name="Schaetzl H.M."/>
            <person name="Da Costa M."/>
            <person name="Taylor L."/>
            <person name="Cohen F.E."/>
            <person name="Prusiner S.B."/>
        </authorList>
    </citation>
    <scope>NUCLEOTIDE SEQUENCE [GENOMIC DNA]</scope>
</reference>
<reference key="2">
    <citation type="journal article" date="1997" name="J. Mol. Biol.">
        <authorList>
            <person name="Schaetzl H.M."/>
            <person name="Da Costa M."/>
            <person name="Taylor L."/>
            <person name="Cohen F.E."/>
            <person name="Prusiner S.B."/>
        </authorList>
    </citation>
    <scope>ERRATUM OF PUBMED:7837269</scope>
</reference>
<proteinExistence type="inferred from homology"/>
<dbReference type="EMBL" id="U08301">
    <property type="protein sequence ID" value="AAC50090.1"/>
    <property type="molecule type" value="Genomic_DNA"/>
</dbReference>
<dbReference type="PIR" id="S53625">
    <property type="entry name" value="S53625"/>
</dbReference>
<dbReference type="SMR" id="P67994"/>
<dbReference type="GlyCosmos" id="P67994">
    <property type="glycosylation" value="2 sites, No reported glycans"/>
</dbReference>
<dbReference type="GO" id="GO:0005794">
    <property type="term" value="C:Golgi apparatus"/>
    <property type="evidence" value="ECO:0007669"/>
    <property type="project" value="UniProtKB-SubCell"/>
</dbReference>
<dbReference type="GO" id="GO:0005886">
    <property type="term" value="C:plasma membrane"/>
    <property type="evidence" value="ECO:0007669"/>
    <property type="project" value="UniProtKB-SubCell"/>
</dbReference>
<dbReference type="GO" id="GO:0098552">
    <property type="term" value="C:side of membrane"/>
    <property type="evidence" value="ECO:0007669"/>
    <property type="project" value="UniProtKB-KW"/>
</dbReference>
<dbReference type="GO" id="GO:0005507">
    <property type="term" value="F:copper ion binding"/>
    <property type="evidence" value="ECO:0000250"/>
    <property type="project" value="UniProtKB"/>
</dbReference>
<dbReference type="GO" id="GO:0051260">
    <property type="term" value="P:protein homooligomerization"/>
    <property type="evidence" value="ECO:0007669"/>
    <property type="project" value="InterPro"/>
</dbReference>
<dbReference type="FunFam" id="1.10.790.10:FF:000001">
    <property type="entry name" value="Major prion protein"/>
    <property type="match status" value="1"/>
</dbReference>
<dbReference type="Gene3D" id="1.10.790.10">
    <property type="entry name" value="Prion/Doppel protein, beta-ribbon domain"/>
    <property type="match status" value="1"/>
</dbReference>
<dbReference type="InterPro" id="IPR000817">
    <property type="entry name" value="Prion"/>
</dbReference>
<dbReference type="InterPro" id="IPR036924">
    <property type="entry name" value="Prion/Doppel_b-ribbon_dom_sf"/>
</dbReference>
<dbReference type="InterPro" id="IPR022416">
    <property type="entry name" value="Prion/Doppel_prot_b-ribbon_dom"/>
</dbReference>
<dbReference type="InterPro" id="IPR020949">
    <property type="entry name" value="Prion_copper_b_octapeptide"/>
</dbReference>
<dbReference type="InterPro" id="IPR025860">
    <property type="entry name" value="Prion_N"/>
</dbReference>
<dbReference type="PANTHER" id="PTHR15506">
    <property type="entry name" value="DOPPEL PRION"/>
    <property type="match status" value="1"/>
</dbReference>
<dbReference type="PANTHER" id="PTHR15506:SF2">
    <property type="entry name" value="MAJOR PRION PROTEIN"/>
    <property type="match status" value="1"/>
</dbReference>
<dbReference type="Pfam" id="PF00377">
    <property type="entry name" value="Prion"/>
    <property type="match status" value="1"/>
</dbReference>
<dbReference type="Pfam" id="PF11587">
    <property type="entry name" value="Prion_bPrPp"/>
    <property type="match status" value="1"/>
</dbReference>
<dbReference type="Pfam" id="PF03991">
    <property type="entry name" value="Prion_octapep"/>
    <property type="match status" value="1"/>
</dbReference>
<dbReference type="PRINTS" id="PR00341">
    <property type="entry name" value="PRION"/>
</dbReference>
<dbReference type="SMART" id="SM00157">
    <property type="entry name" value="PRP"/>
    <property type="match status" value="1"/>
</dbReference>
<dbReference type="SUPFAM" id="SSF54098">
    <property type="entry name" value="Prion-like"/>
    <property type="match status" value="1"/>
</dbReference>
<dbReference type="PROSITE" id="PS00291">
    <property type="entry name" value="PRION_1"/>
    <property type="match status" value="1"/>
</dbReference>
<dbReference type="PROSITE" id="PS00706">
    <property type="entry name" value="PRION_2"/>
    <property type="match status" value="1"/>
</dbReference>
<gene>
    <name type="primary">PRNP</name>
    <name type="synonym">PRP</name>
</gene>
<name>PRIO_MACFU</name>
<organism>
    <name type="scientific">Macaca fuscata fuscata</name>
    <name type="common">Japanese macaque</name>
    <dbReference type="NCBI Taxonomy" id="9543"/>
    <lineage>
        <taxon>Eukaryota</taxon>
        <taxon>Metazoa</taxon>
        <taxon>Chordata</taxon>
        <taxon>Craniata</taxon>
        <taxon>Vertebrata</taxon>
        <taxon>Euteleostomi</taxon>
        <taxon>Mammalia</taxon>
        <taxon>Eutheria</taxon>
        <taxon>Euarchontoglires</taxon>
        <taxon>Primates</taxon>
        <taxon>Haplorrhini</taxon>
        <taxon>Catarrhini</taxon>
        <taxon>Cercopithecidae</taxon>
        <taxon>Cercopithecinae</taxon>
        <taxon>Macaca</taxon>
    </lineage>
</organism>
<protein>
    <recommendedName>
        <fullName>Major prion protein</fullName>
        <shortName>PrP</shortName>
    </recommendedName>
    <alternativeName>
        <fullName>PrP27-30</fullName>
    </alternativeName>
    <alternativeName>
        <fullName>PrP33-35C</fullName>
    </alternativeName>
    <cdAntigenName>CD230</cdAntigenName>
</protein>
<evidence type="ECO:0000250" key="1"/>
<evidence type="ECO:0000250" key="2">
    <source>
        <dbReference type="UniProtKB" id="P04156"/>
    </source>
</evidence>
<evidence type="ECO:0000250" key="3">
    <source>
        <dbReference type="UniProtKB" id="P04273"/>
    </source>
</evidence>
<evidence type="ECO:0000250" key="4">
    <source>
        <dbReference type="UniProtKB" id="P04925"/>
    </source>
</evidence>
<evidence type="ECO:0000255" key="5"/>
<evidence type="ECO:0000256" key="6">
    <source>
        <dbReference type="SAM" id="MobiDB-lite"/>
    </source>
</evidence>
<evidence type="ECO:0000305" key="7"/>
<feature type="signal peptide" evidence="1">
    <location>
        <begin position="1"/>
        <end position="22"/>
    </location>
</feature>
<feature type="chain" id="PRO_0000025685" description="Major prion protein">
    <location>
        <begin position="23"/>
        <end position="230"/>
    </location>
</feature>
<feature type="propeptide" id="PRO_0000025686" description="Removed in mature form" evidence="1">
    <location>
        <begin position="231"/>
        <end position="253"/>
    </location>
</feature>
<feature type="repeat" description="1">
    <location>
        <begin position="51"/>
        <end position="59"/>
    </location>
</feature>
<feature type="repeat" description="2">
    <location>
        <begin position="60"/>
        <end position="67"/>
    </location>
</feature>
<feature type="repeat" description="3">
    <location>
        <begin position="68"/>
        <end position="75"/>
    </location>
</feature>
<feature type="repeat" description="4">
    <location>
        <begin position="76"/>
        <end position="83"/>
    </location>
</feature>
<feature type="repeat" description="5">
    <location>
        <begin position="84"/>
        <end position="91"/>
    </location>
</feature>
<feature type="region of interest" description="Interaction with GRB2, ERI3 and SYN1" evidence="4">
    <location>
        <begin position="23"/>
        <end position="230"/>
    </location>
</feature>
<feature type="region of interest" description="Disordered" evidence="6">
    <location>
        <begin position="26"/>
        <end position="108"/>
    </location>
</feature>
<feature type="region of interest" description="5 X 8 AA tandem repeats of P-H-G-G-G-W-G-Q">
    <location>
        <begin position="51"/>
        <end position="91"/>
    </location>
</feature>
<feature type="compositionally biased region" description="Gly residues" evidence="6">
    <location>
        <begin position="52"/>
        <end position="95"/>
    </location>
</feature>
<feature type="compositionally biased region" description="Basic residues" evidence="6">
    <location>
        <begin position="98"/>
        <end position="108"/>
    </location>
</feature>
<feature type="binding site" evidence="2">
    <location>
        <position position="61"/>
    </location>
    <ligand>
        <name>Cu(2+)</name>
        <dbReference type="ChEBI" id="CHEBI:29036"/>
        <label>1</label>
    </ligand>
</feature>
<feature type="binding site" evidence="2">
    <location>
        <position position="62"/>
    </location>
    <ligand>
        <name>Cu(2+)</name>
        <dbReference type="ChEBI" id="CHEBI:29036"/>
        <label>1</label>
    </ligand>
</feature>
<feature type="binding site" evidence="2">
    <location>
        <position position="63"/>
    </location>
    <ligand>
        <name>Cu(2+)</name>
        <dbReference type="ChEBI" id="CHEBI:29036"/>
        <label>1</label>
    </ligand>
</feature>
<feature type="binding site" evidence="2">
    <location>
        <position position="69"/>
    </location>
    <ligand>
        <name>Cu(2+)</name>
        <dbReference type="ChEBI" id="CHEBI:29036"/>
        <label>2</label>
    </ligand>
</feature>
<feature type="binding site" evidence="2">
    <location>
        <position position="70"/>
    </location>
    <ligand>
        <name>Cu(2+)</name>
        <dbReference type="ChEBI" id="CHEBI:29036"/>
        <label>2</label>
    </ligand>
</feature>
<feature type="binding site" evidence="2">
    <location>
        <position position="71"/>
    </location>
    <ligand>
        <name>Cu(2+)</name>
        <dbReference type="ChEBI" id="CHEBI:29036"/>
        <label>2</label>
    </ligand>
</feature>
<feature type="binding site" evidence="2">
    <location>
        <position position="77"/>
    </location>
    <ligand>
        <name>Cu(2+)</name>
        <dbReference type="ChEBI" id="CHEBI:29036"/>
        <label>3</label>
    </ligand>
</feature>
<feature type="binding site" evidence="2">
    <location>
        <position position="78"/>
    </location>
    <ligand>
        <name>Cu(2+)</name>
        <dbReference type="ChEBI" id="CHEBI:29036"/>
        <label>3</label>
    </ligand>
</feature>
<feature type="binding site" evidence="2">
    <location>
        <position position="79"/>
    </location>
    <ligand>
        <name>Cu(2+)</name>
        <dbReference type="ChEBI" id="CHEBI:29036"/>
        <label>3</label>
    </ligand>
</feature>
<feature type="binding site" evidence="2">
    <location>
        <position position="85"/>
    </location>
    <ligand>
        <name>Cu(2+)</name>
        <dbReference type="ChEBI" id="CHEBI:29036"/>
        <label>4</label>
    </ligand>
</feature>
<feature type="binding site" evidence="2">
    <location>
        <position position="86"/>
    </location>
    <ligand>
        <name>Cu(2+)</name>
        <dbReference type="ChEBI" id="CHEBI:29036"/>
        <label>4</label>
    </ligand>
</feature>
<feature type="binding site" evidence="2">
    <location>
        <position position="87"/>
    </location>
    <ligand>
        <name>Cu(2+)</name>
        <dbReference type="ChEBI" id="CHEBI:29036"/>
        <label>4</label>
    </ligand>
</feature>
<feature type="lipid moiety-binding region" description="GPI-anchor amidated serine" evidence="3">
    <location>
        <position position="230"/>
    </location>
</feature>
<feature type="glycosylation site" description="N-linked (GlcNAc...) asparagine" evidence="5">
    <location>
        <position position="181"/>
    </location>
</feature>
<feature type="glycosylation site" description="N-linked (GlcNAc...) asparagine" evidence="5">
    <location>
        <position position="197"/>
    </location>
</feature>
<feature type="disulfide bond" evidence="3">
    <location>
        <begin position="179"/>
        <end position="214"/>
    </location>
</feature>
<sequence length="253" mass="27676">MANLGCWMLVLFVATWSDLGLCKKRPKPGGWNTGGSRYPGQGSPGGNRYPPQGGGGWGQPHGGGWGQPHGGGWGQPHGGGWGQPHGGGWGQGGGTHNQWHKPSKPKTSMKHMAGAAAAGAVVGGLGGYMLGSAMSRPLIHFGNDYEDRYYRENMYRYPNQVYYRPVDQYSNQNNFVHDCVNITIKQHTVTTTTKGENFTETDVKMMERVVEQMCITQYEKESQAYYQRGSSMVLFSSPPVILLISFLIFLIVG</sequence>
<comment type="function">
    <text evidence="2 4">Its primary physiological function is unclear. Has cytoprotective activity against internal or environmental stresses. May play a role in neuronal development and synaptic plasticity. May be required for neuronal myelin sheath maintenance. May play a role in iron uptake and iron homeostasis. Soluble oligomers are toxic to cultured neuroblastoma cells and induce apoptosis (in vitro). Association with GPC1 (via its heparan sulfate chains) targets PRNP to lipid rafts. Also provides Cu(2+) or Zn(2+) for the ascorbate-mediated GPC1 deaminase degradation of its heparan sulfate side chains (By similarity).</text>
</comment>
<comment type="subunit">
    <text evidence="2 4">Monomer and homodimer. Has a tendency to aggregate into amyloid fibrils containing a cross-beta spine, formed by a steric zipper of superposed beta-strands. Soluble oligomers may represent an intermediate stage on the path to fibril formation. Copper binding may promote oligomerization. Interacts with GRB2, APP, ERI3/PRNPIP and SYN1. Mislocalized cytosolically exposed PrP interacts with MGRN1; this interaction alters MGRN1 subcellular location and causes lysosomal enlargement. Interacts with KIAA1191.</text>
</comment>
<comment type="subcellular location">
    <subcellularLocation>
        <location evidence="2">Cell membrane</location>
        <topology evidence="2">Lipid-anchor</topology>
        <topology evidence="2">GPI-anchor</topology>
    </subcellularLocation>
    <subcellularLocation>
        <location evidence="4">Golgi apparatus</location>
    </subcellularLocation>
    <text evidence="2">Targeted to lipid rafts via association with the heparan sulfate chains of GPC1. Colocates, in the presence of Cu(2+), to vesicles in para- and perinuclear regions, where both proteins undergo internalization. Heparin displaces PRNP from lipid rafts and promotes endocytosis.</text>
</comment>
<comment type="domain">
    <text evidence="2">The normal, monomeric form has a mainly alpha-helical structure. The disease-associated, protease-resistant form forms amyloid fibrils containing a cross-beta spine, formed by a steric zipper of superposed beta-strands. Disease mutations may favor intermolecular contacts via short beta strands, and may thereby trigger oligomerization.</text>
</comment>
<comment type="domain">
    <text evidence="2">Contains an N-terminal region composed of octamer repeats. At low copper concentrations, the sidechains of His residues from three or four repeats contribute to the binding of a single copper ion. Alternatively, a copper ion can be bound by interaction with the sidechain and backbone amide nitrogen of a single His residue. The observed copper binding stoichiometry suggests that two repeat regions cooperate to stabilize the binding of a single copper ion. At higher copper concentrations, each octamer can bind one copper ion by interactions with the His sidechain and Gly backbone atoms. A mixture of binding types may occur, especially in the case of octamer repeat expansion. Copper binding may stabilize the conformation of this region and may promote oligomerization.</text>
</comment>
<comment type="disease">
    <text evidence="7">PrP is found in high quantity in the brain of humans and animals infected with the degenerative neurological diseases kuru, Creutzfeldt-Jakob disease (CJD), Gerstmann-Straussler syndrome (GSS), scrapie, bovine spongiform encephalopathy (BSE), transmissible mink encephalopathy (TME), etc.</text>
</comment>
<comment type="similarity">
    <text evidence="7">Belongs to the prion family.</text>
</comment>
<accession>P67994</accession>
<accession>P40254</accession>
<keyword id="KW-0034">Amyloid</keyword>
<keyword id="KW-1003">Cell membrane</keyword>
<keyword id="KW-0186">Copper</keyword>
<keyword id="KW-1015">Disulfide bond</keyword>
<keyword id="KW-0325">Glycoprotein</keyword>
<keyword id="KW-0333">Golgi apparatus</keyword>
<keyword id="KW-0336">GPI-anchor</keyword>
<keyword id="KW-0449">Lipoprotein</keyword>
<keyword id="KW-0472">Membrane</keyword>
<keyword id="KW-0479">Metal-binding</keyword>
<keyword id="KW-0640">Prion</keyword>
<keyword id="KW-0677">Repeat</keyword>
<keyword id="KW-0732">Signal</keyword>
<keyword id="KW-0862">Zinc</keyword>